<protein>
    <recommendedName>
        <fullName evidence="1">Chaperone protein HtpG</fullName>
    </recommendedName>
    <alternativeName>
        <fullName evidence="1">Heat shock protein HtpG</fullName>
    </alternativeName>
    <alternativeName>
        <fullName evidence="1">High temperature protein G</fullName>
    </alternativeName>
</protein>
<feature type="chain" id="PRO_1000127026" description="Chaperone protein HtpG">
    <location>
        <begin position="1"/>
        <end position="626"/>
    </location>
</feature>
<feature type="region of interest" description="A; substrate-binding" evidence="1">
    <location>
        <begin position="1"/>
        <end position="341"/>
    </location>
</feature>
<feature type="region of interest" description="B" evidence="1">
    <location>
        <begin position="342"/>
        <end position="552"/>
    </location>
</feature>
<feature type="region of interest" description="Disordered" evidence="2">
    <location>
        <begin position="490"/>
        <end position="509"/>
    </location>
</feature>
<feature type="region of interest" description="C" evidence="1">
    <location>
        <begin position="553"/>
        <end position="626"/>
    </location>
</feature>
<feature type="compositionally biased region" description="Basic and acidic residues" evidence="2">
    <location>
        <begin position="498"/>
        <end position="509"/>
    </location>
</feature>
<proteinExistence type="inferred from homology"/>
<comment type="function">
    <text evidence="1">Molecular chaperone. Has ATPase activity.</text>
</comment>
<comment type="subunit">
    <text evidence="1">Homodimer.</text>
</comment>
<comment type="subcellular location">
    <subcellularLocation>
        <location evidence="1">Cytoplasm</location>
    </subcellularLocation>
</comment>
<comment type="similarity">
    <text evidence="1">Belongs to the heat shock protein 90 family.</text>
</comment>
<evidence type="ECO:0000255" key="1">
    <source>
        <dbReference type="HAMAP-Rule" id="MF_00505"/>
    </source>
</evidence>
<evidence type="ECO:0000256" key="2">
    <source>
        <dbReference type="SAM" id="MobiDB-lite"/>
    </source>
</evidence>
<dbReference type="EMBL" id="CP000962">
    <property type="protein sequence ID" value="ACA56535.1"/>
    <property type="molecule type" value="Genomic_DNA"/>
</dbReference>
<dbReference type="RefSeq" id="WP_012344393.1">
    <property type="nucleotide sequence ID" value="NC_010520.1"/>
</dbReference>
<dbReference type="SMR" id="B1KUN4"/>
<dbReference type="KEGG" id="cbl:CLK_1438"/>
<dbReference type="HOGENOM" id="CLU_006684_3_0_9"/>
<dbReference type="GO" id="GO:0005737">
    <property type="term" value="C:cytoplasm"/>
    <property type="evidence" value="ECO:0007669"/>
    <property type="project" value="UniProtKB-SubCell"/>
</dbReference>
<dbReference type="GO" id="GO:0005524">
    <property type="term" value="F:ATP binding"/>
    <property type="evidence" value="ECO:0007669"/>
    <property type="project" value="UniProtKB-UniRule"/>
</dbReference>
<dbReference type="GO" id="GO:0016887">
    <property type="term" value="F:ATP hydrolysis activity"/>
    <property type="evidence" value="ECO:0007669"/>
    <property type="project" value="InterPro"/>
</dbReference>
<dbReference type="GO" id="GO:0140662">
    <property type="term" value="F:ATP-dependent protein folding chaperone"/>
    <property type="evidence" value="ECO:0007669"/>
    <property type="project" value="InterPro"/>
</dbReference>
<dbReference type="GO" id="GO:0051082">
    <property type="term" value="F:unfolded protein binding"/>
    <property type="evidence" value="ECO:0007669"/>
    <property type="project" value="UniProtKB-UniRule"/>
</dbReference>
<dbReference type="CDD" id="cd16927">
    <property type="entry name" value="HATPase_Hsp90-like"/>
    <property type="match status" value="1"/>
</dbReference>
<dbReference type="FunFam" id="1.20.120.790:FF:000006">
    <property type="entry name" value="Chaperone protein HtpG"/>
    <property type="match status" value="1"/>
</dbReference>
<dbReference type="FunFam" id="3.40.50.11260:FF:000008">
    <property type="entry name" value="Chaperone protein HtpG"/>
    <property type="match status" value="1"/>
</dbReference>
<dbReference type="FunFam" id="3.30.565.10:FF:000054">
    <property type="entry name" value="Heat shock protein 90"/>
    <property type="match status" value="1"/>
</dbReference>
<dbReference type="FunFam" id="3.30.230.80:FF:000002">
    <property type="entry name" value="Molecular chaperone HtpG"/>
    <property type="match status" value="1"/>
</dbReference>
<dbReference type="Gene3D" id="3.30.230.80">
    <property type="match status" value="1"/>
</dbReference>
<dbReference type="Gene3D" id="3.40.50.11260">
    <property type="match status" value="1"/>
</dbReference>
<dbReference type="Gene3D" id="1.20.120.790">
    <property type="entry name" value="Heat shock protein 90, C-terminal domain"/>
    <property type="match status" value="1"/>
</dbReference>
<dbReference type="Gene3D" id="3.30.565.10">
    <property type="entry name" value="Histidine kinase-like ATPase, C-terminal domain"/>
    <property type="match status" value="1"/>
</dbReference>
<dbReference type="HAMAP" id="MF_00505">
    <property type="entry name" value="HSP90"/>
    <property type="match status" value="1"/>
</dbReference>
<dbReference type="InterPro" id="IPR036890">
    <property type="entry name" value="HATPase_C_sf"/>
</dbReference>
<dbReference type="InterPro" id="IPR019805">
    <property type="entry name" value="Heat_shock_protein_90_CS"/>
</dbReference>
<dbReference type="InterPro" id="IPR037196">
    <property type="entry name" value="HSP90_C"/>
</dbReference>
<dbReference type="InterPro" id="IPR001404">
    <property type="entry name" value="Hsp90_fam"/>
</dbReference>
<dbReference type="InterPro" id="IPR020575">
    <property type="entry name" value="Hsp90_N"/>
</dbReference>
<dbReference type="InterPro" id="IPR020568">
    <property type="entry name" value="Ribosomal_Su5_D2-typ_SF"/>
</dbReference>
<dbReference type="NCBIfam" id="NF003555">
    <property type="entry name" value="PRK05218.1"/>
    <property type="match status" value="1"/>
</dbReference>
<dbReference type="PANTHER" id="PTHR11528">
    <property type="entry name" value="HEAT SHOCK PROTEIN 90 FAMILY MEMBER"/>
    <property type="match status" value="1"/>
</dbReference>
<dbReference type="Pfam" id="PF13589">
    <property type="entry name" value="HATPase_c_3"/>
    <property type="match status" value="1"/>
</dbReference>
<dbReference type="Pfam" id="PF00183">
    <property type="entry name" value="HSP90"/>
    <property type="match status" value="2"/>
</dbReference>
<dbReference type="PIRSF" id="PIRSF002583">
    <property type="entry name" value="Hsp90"/>
    <property type="match status" value="1"/>
</dbReference>
<dbReference type="PRINTS" id="PR00775">
    <property type="entry name" value="HEATSHOCK90"/>
</dbReference>
<dbReference type="SUPFAM" id="SSF55874">
    <property type="entry name" value="ATPase domain of HSP90 chaperone/DNA topoisomerase II/histidine kinase"/>
    <property type="match status" value="1"/>
</dbReference>
<dbReference type="SUPFAM" id="SSF110942">
    <property type="entry name" value="HSP90 C-terminal domain"/>
    <property type="match status" value="1"/>
</dbReference>
<dbReference type="SUPFAM" id="SSF54211">
    <property type="entry name" value="Ribosomal protein S5 domain 2-like"/>
    <property type="match status" value="1"/>
</dbReference>
<dbReference type="PROSITE" id="PS00298">
    <property type="entry name" value="HSP90"/>
    <property type="match status" value="1"/>
</dbReference>
<organism>
    <name type="scientific">Clostridium botulinum (strain Loch Maree / Type A3)</name>
    <dbReference type="NCBI Taxonomy" id="498214"/>
    <lineage>
        <taxon>Bacteria</taxon>
        <taxon>Bacillati</taxon>
        <taxon>Bacillota</taxon>
        <taxon>Clostridia</taxon>
        <taxon>Eubacteriales</taxon>
        <taxon>Clostridiaceae</taxon>
        <taxon>Clostridium</taxon>
    </lineage>
</organism>
<gene>
    <name evidence="1" type="primary">htpG</name>
    <name type="ordered locus">CLK_1438</name>
</gene>
<name>HTPG_CLOBM</name>
<keyword id="KW-0067">ATP-binding</keyword>
<keyword id="KW-0143">Chaperone</keyword>
<keyword id="KW-0963">Cytoplasm</keyword>
<keyword id="KW-0547">Nucleotide-binding</keyword>
<keyword id="KW-0346">Stress response</keyword>
<reference key="1">
    <citation type="journal article" date="2007" name="PLoS ONE">
        <title>Analysis of the neurotoxin complex genes in Clostridium botulinum A1-A4 and B1 strains: BoNT/A3, /Ba4 and /B1 clusters are located within plasmids.</title>
        <authorList>
            <person name="Smith T.J."/>
            <person name="Hill K.K."/>
            <person name="Foley B.T."/>
            <person name="Detter J.C."/>
            <person name="Munk A.C."/>
            <person name="Bruce D.C."/>
            <person name="Doggett N.A."/>
            <person name="Smith L.A."/>
            <person name="Marks J.D."/>
            <person name="Xie G."/>
            <person name="Brettin T.S."/>
        </authorList>
    </citation>
    <scope>NUCLEOTIDE SEQUENCE [LARGE SCALE GENOMIC DNA]</scope>
    <source>
        <strain>Loch Maree / Type A3</strain>
    </source>
</reference>
<accession>B1KUN4</accession>
<sequence length="626" mass="72882">METKQFKAESKRLLDLMINSIYTHKEIFLRELISNSSDAMDKIYYKTLTEDSLKFERDDYYIKVVFDKENRVLKIADTGIGMTKEELENNLGVIAKSGSLQFKKENEVKEGYDIIGQFGVGFYSAFLVSDDVTVISKAFGSNEAYKWNSKGAEGYTIEPCEKEAYGTEIILKIKDNTEEENYDEFLDEYTLKSIIKKYSDFIRYPIKMDLTKTKPKEDNKEEFEEYKEEETINSMVPIWRKNKNELKAEDYENFYAEKHYGFDKPIKYIHTSVDGVVSYNAILFIPETTPYDFYTKEYEKGLELYSSGVLIMNKCGDLLPDYFGFVKGIVDSEDLSLNISREILQHDRQLKLIAKNIKTKIKNELESLLKKERDKYEKFYESFGRQLKYGVYSDFGSNKDILQDLLMFYSSKEKKMVTLAEYVSRMPEDQKYIYYAVGESNERIEKLPQIEGVLDKGYEVLYFTDDIDEFAIKMLMNYKEKEFKSVSSGDLGIEGEEKENTSSSDDKENKELFESMKDILSGKVKDVRASKRLKNHPVCLANEGELSIEMEKVLNAMPNNQNIKADKVLEININHDVFKPLKEAYEGDKEKLKLYTDLLYNQALLIEGLTINDPVEFTNNICKIMK</sequence>